<accession>Q7VMJ6</accession>
<keyword id="KW-0378">Hydrolase</keyword>
<keyword id="KW-0479">Metal-binding</keyword>
<keyword id="KW-1185">Reference proteome</keyword>
<keyword id="KW-0862">Zinc</keyword>
<feature type="chain" id="PRO_0000171652" description="Cytidine deaminase">
    <location>
        <begin position="1"/>
        <end position="299"/>
    </location>
</feature>
<feature type="domain" description="CMP/dCMP-type deaminase 1" evidence="2">
    <location>
        <begin position="56"/>
        <end position="176"/>
    </location>
</feature>
<feature type="domain" description="CMP/dCMP-type deaminase 2" evidence="2">
    <location>
        <begin position="194"/>
        <end position="299"/>
    </location>
</feature>
<feature type="active site" description="Proton donor" evidence="1">
    <location>
        <position position="112"/>
    </location>
</feature>
<feature type="binding site" evidence="1">
    <location>
        <begin position="97"/>
        <end position="99"/>
    </location>
    <ligand>
        <name>substrate</name>
    </ligand>
</feature>
<feature type="binding site" evidence="1">
    <location>
        <position position="110"/>
    </location>
    <ligand>
        <name>Zn(2+)</name>
        <dbReference type="ChEBI" id="CHEBI:29105"/>
        <note>catalytic</note>
    </ligand>
</feature>
<feature type="binding site" evidence="1">
    <location>
        <position position="137"/>
    </location>
    <ligand>
        <name>Zn(2+)</name>
        <dbReference type="ChEBI" id="CHEBI:29105"/>
        <note>catalytic</note>
    </ligand>
</feature>
<feature type="binding site" evidence="1">
    <location>
        <position position="140"/>
    </location>
    <ligand>
        <name>Zn(2+)</name>
        <dbReference type="ChEBI" id="CHEBI:29105"/>
        <note>catalytic</note>
    </ligand>
</feature>
<proteinExistence type="inferred from homology"/>
<sequence length="299" mass="32477">MTMPTLSALQHRLAQLAEQKNEPLTLAIIEQLKQQSYQGALSAPLVQQFCQQFSLSKIELGLGCVPIAACYALTPVSHFCVGAVAIGLSGSFYFGANQEFAGIAMQQTVHAEQSAISHAWLAGEGAISDMVVNCTPCGHCRQFMNELNTATTLQIHLPHRQHNTLQQYLIDAFGPKDLNIANVLFDQQHIVLPLQGDALVQATIKEAQQAYAPYSQAVSAVALQVGEQIICGRYAENAAFNPSLLPLQSALNYRRFLGLSDVAVSRVVMVEKRAVLSHYHMSKALAETALGLTLEYIAV</sequence>
<reference key="1">
    <citation type="submission" date="2003-06" db="EMBL/GenBank/DDBJ databases">
        <title>The complete genome sequence of Haemophilus ducreyi.</title>
        <authorList>
            <person name="Munson R.S. Jr."/>
            <person name="Ray W.C."/>
            <person name="Mahairas G."/>
            <person name="Sabo P."/>
            <person name="Mungur R."/>
            <person name="Johnson L."/>
            <person name="Nguyen D."/>
            <person name="Wang J."/>
            <person name="Forst C."/>
            <person name="Hood L."/>
        </authorList>
    </citation>
    <scope>NUCLEOTIDE SEQUENCE [LARGE SCALE GENOMIC DNA]</scope>
    <source>
        <strain>35000HP / ATCC 700724</strain>
    </source>
</reference>
<comment type="function">
    <text evidence="1">This enzyme scavenges exogenous and endogenous cytidine and 2'-deoxycytidine for UMP synthesis.</text>
</comment>
<comment type="catalytic activity">
    <reaction evidence="1">
        <text>cytidine + H2O + H(+) = uridine + NH4(+)</text>
        <dbReference type="Rhea" id="RHEA:16069"/>
        <dbReference type="ChEBI" id="CHEBI:15377"/>
        <dbReference type="ChEBI" id="CHEBI:15378"/>
        <dbReference type="ChEBI" id="CHEBI:16704"/>
        <dbReference type="ChEBI" id="CHEBI:17562"/>
        <dbReference type="ChEBI" id="CHEBI:28938"/>
        <dbReference type="EC" id="3.5.4.5"/>
    </reaction>
</comment>
<comment type="catalytic activity">
    <reaction evidence="1">
        <text>2'-deoxycytidine + H2O + H(+) = 2'-deoxyuridine + NH4(+)</text>
        <dbReference type="Rhea" id="RHEA:13433"/>
        <dbReference type="ChEBI" id="CHEBI:15377"/>
        <dbReference type="ChEBI" id="CHEBI:15378"/>
        <dbReference type="ChEBI" id="CHEBI:15698"/>
        <dbReference type="ChEBI" id="CHEBI:16450"/>
        <dbReference type="ChEBI" id="CHEBI:28938"/>
        <dbReference type="EC" id="3.5.4.5"/>
    </reaction>
</comment>
<comment type="cofactor">
    <cofactor evidence="1">
        <name>Zn(2+)</name>
        <dbReference type="ChEBI" id="CHEBI:29105"/>
    </cofactor>
    <text evidence="1">Binds 1 zinc ion.</text>
</comment>
<comment type="subunit">
    <text evidence="1">Homodimer.</text>
</comment>
<comment type="similarity">
    <text evidence="1">Belongs to the cytidine and deoxycytidylate deaminase family.</text>
</comment>
<organism>
    <name type="scientific">Haemophilus ducreyi (strain 35000HP / ATCC 700724)</name>
    <dbReference type="NCBI Taxonomy" id="233412"/>
    <lineage>
        <taxon>Bacteria</taxon>
        <taxon>Pseudomonadati</taxon>
        <taxon>Pseudomonadota</taxon>
        <taxon>Gammaproteobacteria</taxon>
        <taxon>Pasteurellales</taxon>
        <taxon>Pasteurellaceae</taxon>
        <taxon>Haemophilus</taxon>
    </lineage>
</organism>
<gene>
    <name evidence="1" type="primary">cdd</name>
    <name type="ordered locus">HD_0979</name>
</gene>
<name>CDD_HAEDU</name>
<evidence type="ECO:0000255" key="1">
    <source>
        <dbReference type="HAMAP-Rule" id="MF_01558"/>
    </source>
</evidence>
<evidence type="ECO:0000255" key="2">
    <source>
        <dbReference type="PROSITE-ProRule" id="PRU01083"/>
    </source>
</evidence>
<dbReference type="EC" id="3.5.4.5" evidence="1"/>
<dbReference type="EMBL" id="AE017143">
    <property type="protein sequence ID" value="AAP95860.1"/>
    <property type="molecule type" value="Genomic_DNA"/>
</dbReference>
<dbReference type="SMR" id="Q7VMJ6"/>
<dbReference type="STRING" id="233412.HD_0979"/>
<dbReference type="KEGG" id="hdu:HD_0979"/>
<dbReference type="eggNOG" id="COG0295">
    <property type="taxonomic scope" value="Bacteria"/>
</dbReference>
<dbReference type="HOGENOM" id="CLU_052424_0_0_6"/>
<dbReference type="Proteomes" id="UP000001022">
    <property type="component" value="Chromosome"/>
</dbReference>
<dbReference type="GO" id="GO:0005829">
    <property type="term" value="C:cytosol"/>
    <property type="evidence" value="ECO:0007669"/>
    <property type="project" value="TreeGrafter"/>
</dbReference>
<dbReference type="GO" id="GO:0004126">
    <property type="term" value="F:cytidine deaminase activity"/>
    <property type="evidence" value="ECO:0007669"/>
    <property type="project" value="UniProtKB-UniRule"/>
</dbReference>
<dbReference type="GO" id="GO:0042802">
    <property type="term" value="F:identical protein binding"/>
    <property type="evidence" value="ECO:0007669"/>
    <property type="project" value="UniProtKB-ARBA"/>
</dbReference>
<dbReference type="GO" id="GO:0008270">
    <property type="term" value="F:zinc ion binding"/>
    <property type="evidence" value="ECO:0007669"/>
    <property type="project" value="UniProtKB-UniRule"/>
</dbReference>
<dbReference type="GO" id="GO:0009972">
    <property type="term" value="P:cytidine deamination"/>
    <property type="evidence" value="ECO:0007669"/>
    <property type="project" value="InterPro"/>
</dbReference>
<dbReference type="CDD" id="cd01283">
    <property type="entry name" value="cytidine_deaminase"/>
    <property type="match status" value="1"/>
</dbReference>
<dbReference type="FunFam" id="3.40.140.10:FF:000007">
    <property type="entry name" value="Cytidine deaminase"/>
    <property type="match status" value="1"/>
</dbReference>
<dbReference type="Gene3D" id="3.40.140.10">
    <property type="entry name" value="Cytidine Deaminase, domain 2"/>
    <property type="match status" value="2"/>
</dbReference>
<dbReference type="HAMAP" id="MF_01558">
    <property type="entry name" value="Cyt_deam"/>
    <property type="match status" value="1"/>
</dbReference>
<dbReference type="InterPro" id="IPR016192">
    <property type="entry name" value="APOBEC/CMP_deaminase_Zn-bd"/>
</dbReference>
<dbReference type="InterPro" id="IPR002125">
    <property type="entry name" value="CMP_dCMP_dom"/>
</dbReference>
<dbReference type="InterPro" id="IPR013171">
    <property type="entry name" value="Cyd/dCyd_deaminase_Zn-bd"/>
</dbReference>
<dbReference type="InterPro" id="IPR050202">
    <property type="entry name" value="Cyt/Deoxycyt_deaminase"/>
</dbReference>
<dbReference type="InterPro" id="IPR016193">
    <property type="entry name" value="Cytidine_deaminase-like"/>
</dbReference>
<dbReference type="InterPro" id="IPR020797">
    <property type="entry name" value="Cytidine_deaminase_bacteria"/>
</dbReference>
<dbReference type="NCBIfam" id="NF006537">
    <property type="entry name" value="PRK09027.1"/>
    <property type="match status" value="1"/>
</dbReference>
<dbReference type="PANTHER" id="PTHR11644">
    <property type="entry name" value="CYTIDINE DEAMINASE"/>
    <property type="match status" value="1"/>
</dbReference>
<dbReference type="PANTHER" id="PTHR11644:SF2">
    <property type="entry name" value="CYTIDINE DEAMINASE"/>
    <property type="match status" value="1"/>
</dbReference>
<dbReference type="Pfam" id="PF00383">
    <property type="entry name" value="dCMP_cyt_deam_1"/>
    <property type="match status" value="1"/>
</dbReference>
<dbReference type="Pfam" id="PF08211">
    <property type="entry name" value="dCMP_cyt_deam_2"/>
    <property type="match status" value="1"/>
</dbReference>
<dbReference type="PIRSF" id="PIRSF006334">
    <property type="entry name" value="Cdd_plus_pseudo"/>
    <property type="match status" value="1"/>
</dbReference>
<dbReference type="SUPFAM" id="SSF53927">
    <property type="entry name" value="Cytidine deaminase-like"/>
    <property type="match status" value="2"/>
</dbReference>
<dbReference type="PROSITE" id="PS00903">
    <property type="entry name" value="CYT_DCMP_DEAMINASES_1"/>
    <property type="match status" value="1"/>
</dbReference>
<dbReference type="PROSITE" id="PS51747">
    <property type="entry name" value="CYT_DCMP_DEAMINASES_2"/>
    <property type="match status" value="2"/>
</dbReference>
<protein>
    <recommendedName>
        <fullName evidence="1">Cytidine deaminase</fullName>
        <ecNumber evidence="1">3.5.4.5</ecNumber>
    </recommendedName>
    <alternativeName>
        <fullName evidence="1">Cytidine aminohydrolase</fullName>
        <shortName evidence="1">CDA</shortName>
    </alternativeName>
</protein>